<comment type="similarity">
    <text evidence="1">Belongs to the bacterial ribosomal protein bL32 family.</text>
</comment>
<organism>
    <name type="scientific">Actinobacillus pleuropneumoniae serotype 3 (strain JL03)</name>
    <dbReference type="NCBI Taxonomy" id="434271"/>
    <lineage>
        <taxon>Bacteria</taxon>
        <taxon>Pseudomonadati</taxon>
        <taxon>Pseudomonadota</taxon>
        <taxon>Gammaproteobacteria</taxon>
        <taxon>Pasteurellales</taxon>
        <taxon>Pasteurellaceae</taxon>
        <taxon>Actinobacillus</taxon>
    </lineage>
</organism>
<keyword id="KW-0687">Ribonucleoprotein</keyword>
<keyword id="KW-0689">Ribosomal protein</keyword>
<dbReference type="EMBL" id="CP000687">
    <property type="protein sequence ID" value="ABY69960.1"/>
    <property type="molecule type" value="Genomic_DNA"/>
</dbReference>
<dbReference type="RefSeq" id="WP_005598552.1">
    <property type="nucleotide sequence ID" value="NC_010278.1"/>
</dbReference>
<dbReference type="SMR" id="B0BQX5"/>
<dbReference type="GeneID" id="92744027"/>
<dbReference type="KEGG" id="apj:APJL_1404"/>
<dbReference type="HOGENOM" id="CLU_129084_2_1_6"/>
<dbReference type="Proteomes" id="UP000008547">
    <property type="component" value="Chromosome"/>
</dbReference>
<dbReference type="GO" id="GO:0015934">
    <property type="term" value="C:large ribosomal subunit"/>
    <property type="evidence" value="ECO:0007669"/>
    <property type="project" value="InterPro"/>
</dbReference>
<dbReference type="GO" id="GO:0003735">
    <property type="term" value="F:structural constituent of ribosome"/>
    <property type="evidence" value="ECO:0007669"/>
    <property type="project" value="InterPro"/>
</dbReference>
<dbReference type="GO" id="GO:0006412">
    <property type="term" value="P:translation"/>
    <property type="evidence" value="ECO:0007669"/>
    <property type="project" value="UniProtKB-UniRule"/>
</dbReference>
<dbReference type="Gene3D" id="1.20.5.640">
    <property type="entry name" value="Single helix bin"/>
    <property type="match status" value="1"/>
</dbReference>
<dbReference type="HAMAP" id="MF_00340">
    <property type="entry name" value="Ribosomal_bL32"/>
    <property type="match status" value="1"/>
</dbReference>
<dbReference type="InterPro" id="IPR002677">
    <property type="entry name" value="Ribosomal_bL32"/>
</dbReference>
<dbReference type="InterPro" id="IPR044957">
    <property type="entry name" value="Ribosomal_bL32_bact"/>
</dbReference>
<dbReference type="InterPro" id="IPR011332">
    <property type="entry name" value="Ribosomal_zn-bd"/>
</dbReference>
<dbReference type="NCBIfam" id="TIGR01031">
    <property type="entry name" value="rpmF_bact"/>
    <property type="match status" value="1"/>
</dbReference>
<dbReference type="PANTHER" id="PTHR35534">
    <property type="entry name" value="50S RIBOSOMAL PROTEIN L32"/>
    <property type="match status" value="1"/>
</dbReference>
<dbReference type="PANTHER" id="PTHR35534:SF1">
    <property type="entry name" value="LARGE RIBOSOMAL SUBUNIT PROTEIN BL32"/>
    <property type="match status" value="1"/>
</dbReference>
<dbReference type="Pfam" id="PF01783">
    <property type="entry name" value="Ribosomal_L32p"/>
    <property type="match status" value="1"/>
</dbReference>
<dbReference type="SUPFAM" id="SSF57829">
    <property type="entry name" value="Zn-binding ribosomal proteins"/>
    <property type="match status" value="1"/>
</dbReference>
<gene>
    <name evidence="1" type="primary">rpmF</name>
    <name type="ordered locus">APJL_1404</name>
</gene>
<protein>
    <recommendedName>
        <fullName evidence="1">Large ribosomal subunit protein bL32</fullName>
    </recommendedName>
    <alternativeName>
        <fullName evidence="3">50S ribosomal protein L32</fullName>
    </alternativeName>
</protein>
<proteinExistence type="inferred from homology"/>
<reference key="1">
    <citation type="journal article" date="2008" name="PLoS ONE">
        <title>Genome biology of Actinobacillus pleuropneumoniae JL03, an isolate of serotype 3 prevalent in China.</title>
        <authorList>
            <person name="Xu Z."/>
            <person name="Zhou Y."/>
            <person name="Li L."/>
            <person name="Zhou R."/>
            <person name="Xiao S."/>
            <person name="Wan Y."/>
            <person name="Zhang S."/>
            <person name="Wang K."/>
            <person name="Li W."/>
            <person name="Li L."/>
            <person name="Jin H."/>
            <person name="Kang M."/>
            <person name="Dalai B."/>
            <person name="Li T."/>
            <person name="Liu L."/>
            <person name="Cheng Y."/>
            <person name="Zhang L."/>
            <person name="Xu T."/>
            <person name="Zheng H."/>
            <person name="Pu S."/>
            <person name="Wang B."/>
            <person name="Gu W."/>
            <person name="Zhang X.L."/>
            <person name="Zhu G.-F."/>
            <person name="Wang S."/>
            <person name="Zhao G.-P."/>
            <person name="Chen H."/>
        </authorList>
    </citation>
    <scope>NUCLEOTIDE SEQUENCE [LARGE SCALE GENOMIC DNA]</scope>
    <source>
        <strain>JL03</strain>
    </source>
</reference>
<accession>B0BQX5</accession>
<name>RL32_ACTPJ</name>
<feature type="chain" id="PRO_1000120079" description="Large ribosomal subunit protein bL32">
    <location>
        <begin position="1"/>
        <end position="56"/>
    </location>
</feature>
<feature type="region of interest" description="Disordered" evidence="2">
    <location>
        <begin position="1"/>
        <end position="37"/>
    </location>
</feature>
<feature type="compositionally biased region" description="Basic residues" evidence="2">
    <location>
        <begin position="7"/>
        <end position="16"/>
    </location>
</feature>
<sequence>MAVQQNKKSRSRRDMRRSHDALTTAAVSVDKTTGETHLRHHVTADGYYRGRKVINK</sequence>
<evidence type="ECO:0000255" key="1">
    <source>
        <dbReference type="HAMAP-Rule" id="MF_00340"/>
    </source>
</evidence>
<evidence type="ECO:0000256" key="2">
    <source>
        <dbReference type="SAM" id="MobiDB-lite"/>
    </source>
</evidence>
<evidence type="ECO:0000305" key="3"/>